<dbReference type="EMBL" id="AE014134">
    <property type="protein sequence ID" value="ADV36954.1"/>
    <property type="molecule type" value="Genomic_DNA"/>
</dbReference>
<dbReference type="RefSeq" id="NP_001188704.1">
    <property type="nucleotide sequence ID" value="NM_001201775.2"/>
</dbReference>
<dbReference type="ComplexPortal" id="CPX-2339">
    <property type="entry name" value="MKS complex"/>
</dbReference>
<dbReference type="FunCoup" id="M9MRD5">
    <property type="interactions" value="49"/>
</dbReference>
<dbReference type="STRING" id="7227.FBpp0292197"/>
<dbReference type="PaxDb" id="7227-FBpp0292197"/>
<dbReference type="EnsemblMetazoa" id="FBtr0303078">
    <property type="protein sequence ID" value="FBpp0292197"/>
    <property type="gene ID" value="FBgn0261683"/>
</dbReference>
<dbReference type="GeneID" id="10178891"/>
<dbReference type="KEGG" id="dme:Dmel_CG42730"/>
<dbReference type="AGR" id="FB:FBgn0261683"/>
<dbReference type="CTD" id="80776"/>
<dbReference type="FlyBase" id="FBgn0261683">
    <property type="gene designation" value="B9d2"/>
</dbReference>
<dbReference type="VEuPathDB" id="VectorBase:FBgn0261683"/>
<dbReference type="eggNOG" id="KOG4028">
    <property type="taxonomic scope" value="Eukaryota"/>
</dbReference>
<dbReference type="GeneTree" id="ENSGT00940000161428"/>
<dbReference type="HOGENOM" id="CLU_084934_2_1_1"/>
<dbReference type="InParanoid" id="M9MRD5"/>
<dbReference type="OMA" id="DVAYWCH"/>
<dbReference type="OrthoDB" id="184109at2759"/>
<dbReference type="PhylomeDB" id="M9MRD5"/>
<dbReference type="BioGRID-ORCS" id="10178891">
    <property type="hits" value="0 hits in 1 CRISPR screen"/>
</dbReference>
<dbReference type="GenomeRNAi" id="10178891"/>
<dbReference type="PRO" id="PR:M9MRD5"/>
<dbReference type="Proteomes" id="UP000000803">
    <property type="component" value="Chromosome 2L"/>
</dbReference>
<dbReference type="Bgee" id="FBgn0261683">
    <property type="expression patterns" value="Expressed in imaginal disc and 1 other cell type or tissue"/>
</dbReference>
<dbReference type="GO" id="GO:0035869">
    <property type="term" value="C:ciliary transition zone"/>
    <property type="evidence" value="ECO:0000314"/>
    <property type="project" value="FlyBase"/>
</dbReference>
<dbReference type="GO" id="GO:0005737">
    <property type="term" value="C:cytoplasm"/>
    <property type="evidence" value="ECO:0007669"/>
    <property type="project" value="UniProtKB-KW"/>
</dbReference>
<dbReference type="GO" id="GO:0005856">
    <property type="term" value="C:cytoskeleton"/>
    <property type="evidence" value="ECO:0007669"/>
    <property type="project" value="UniProtKB-KW"/>
</dbReference>
<dbReference type="GO" id="GO:0036038">
    <property type="term" value="C:MKS complex"/>
    <property type="evidence" value="ECO:0000250"/>
    <property type="project" value="FlyBase"/>
</dbReference>
<dbReference type="GO" id="GO:1905349">
    <property type="term" value="P:ciliary transition zone assembly"/>
    <property type="evidence" value="ECO:0000315"/>
    <property type="project" value="FlyBase"/>
</dbReference>
<dbReference type="GO" id="GO:0060271">
    <property type="term" value="P:cilium assembly"/>
    <property type="evidence" value="ECO:0000318"/>
    <property type="project" value="GO_Central"/>
</dbReference>
<dbReference type="GO" id="GO:0007288">
    <property type="term" value="P:sperm axoneme assembly"/>
    <property type="evidence" value="ECO:0000315"/>
    <property type="project" value="FlyBase"/>
</dbReference>
<dbReference type="InterPro" id="IPR010796">
    <property type="entry name" value="C2_B9-type_dom"/>
</dbReference>
<dbReference type="PANTHER" id="PTHR12968">
    <property type="entry name" value="B9 DOMAIN-CONTAINING"/>
    <property type="match status" value="1"/>
</dbReference>
<dbReference type="PANTHER" id="PTHR12968:SF2">
    <property type="entry name" value="B9 DOMAIN-CONTAINING PROTEIN 2"/>
    <property type="match status" value="1"/>
</dbReference>
<dbReference type="Pfam" id="PF07162">
    <property type="entry name" value="B9-C2"/>
    <property type="match status" value="1"/>
</dbReference>
<dbReference type="PROSITE" id="PS51381">
    <property type="entry name" value="C2_B9"/>
    <property type="match status" value="1"/>
</dbReference>
<reference evidence="9" key="1">
    <citation type="journal article" date="2000" name="Science">
        <title>The genome sequence of Drosophila melanogaster.</title>
        <authorList>
            <person name="Adams M.D."/>
            <person name="Celniker S.E."/>
            <person name="Holt R.A."/>
            <person name="Evans C.A."/>
            <person name="Gocayne J.D."/>
            <person name="Amanatides P.G."/>
            <person name="Scherer S.E."/>
            <person name="Li P.W."/>
            <person name="Hoskins R.A."/>
            <person name="Galle R.F."/>
            <person name="George R.A."/>
            <person name="Lewis S.E."/>
            <person name="Richards S."/>
            <person name="Ashburner M."/>
            <person name="Henderson S.N."/>
            <person name="Sutton G.G."/>
            <person name="Wortman J.R."/>
            <person name="Yandell M.D."/>
            <person name="Zhang Q."/>
            <person name="Chen L.X."/>
            <person name="Brandon R.C."/>
            <person name="Rogers Y.-H.C."/>
            <person name="Blazej R.G."/>
            <person name="Champe M."/>
            <person name="Pfeiffer B.D."/>
            <person name="Wan K.H."/>
            <person name="Doyle C."/>
            <person name="Baxter E.G."/>
            <person name="Helt G."/>
            <person name="Nelson C.R."/>
            <person name="Miklos G.L.G."/>
            <person name="Abril J.F."/>
            <person name="Agbayani A."/>
            <person name="An H.-J."/>
            <person name="Andrews-Pfannkoch C."/>
            <person name="Baldwin D."/>
            <person name="Ballew R.M."/>
            <person name="Basu A."/>
            <person name="Baxendale J."/>
            <person name="Bayraktaroglu L."/>
            <person name="Beasley E.M."/>
            <person name="Beeson K.Y."/>
            <person name="Benos P.V."/>
            <person name="Berman B.P."/>
            <person name="Bhandari D."/>
            <person name="Bolshakov S."/>
            <person name="Borkova D."/>
            <person name="Botchan M.R."/>
            <person name="Bouck J."/>
            <person name="Brokstein P."/>
            <person name="Brottier P."/>
            <person name="Burtis K.C."/>
            <person name="Busam D.A."/>
            <person name="Butler H."/>
            <person name="Cadieu E."/>
            <person name="Center A."/>
            <person name="Chandra I."/>
            <person name="Cherry J.M."/>
            <person name="Cawley S."/>
            <person name="Dahlke C."/>
            <person name="Davenport L.B."/>
            <person name="Davies P."/>
            <person name="de Pablos B."/>
            <person name="Delcher A."/>
            <person name="Deng Z."/>
            <person name="Mays A.D."/>
            <person name="Dew I."/>
            <person name="Dietz S.M."/>
            <person name="Dodson K."/>
            <person name="Doup L.E."/>
            <person name="Downes M."/>
            <person name="Dugan-Rocha S."/>
            <person name="Dunkov B.C."/>
            <person name="Dunn P."/>
            <person name="Durbin K.J."/>
            <person name="Evangelista C.C."/>
            <person name="Ferraz C."/>
            <person name="Ferriera S."/>
            <person name="Fleischmann W."/>
            <person name="Fosler C."/>
            <person name="Gabrielian A.E."/>
            <person name="Garg N.S."/>
            <person name="Gelbart W.M."/>
            <person name="Glasser K."/>
            <person name="Glodek A."/>
            <person name="Gong F."/>
            <person name="Gorrell J.H."/>
            <person name="Gu Z."/>
            <person name="Guan P."/>
            <person name="Harris M."/>
            <person name="Harris N.L."/>
            <person name="Harvey D.A."/>
            <person name="Heiman T.J."/>
            <person name="Hernandez J.R."/>
            <person name="Houck J."/>
            <person name="Hostin D."/>
            <person name="Houston K.A."/>
            <person name="Howland T.J."/>
            <person name="Wei M.-H."/>
            <person name="Ibegwam C."/>
            <person name="Jalali M."/>
            <person name="Kalush F."/>
            <person name="Karpen G.H."/>
            <person name="Ke Z."/>
            <person name="Kennison J.A."/>
            <person name="Ketchum K.A."/>
            <person name="Kimmel B.E."/>
            <person name="Kodira C.D."/>
            <person name="Kraft C.L."/>
            <person name="Kravitz S."/>
            <person name="Kulp D."/>
            <person name="Lai Z."/>
            <person name="Lasko P."/>
            <person name="Lei Y."/>
            <person name="Levitsky A.A."/>
            <person name="Li J.H."/>
            <person name="Li Z."/>
            <person name="Liang Y."/>
            <person name="Lin X."/>
            <person name="Liu X."/>
            <person name="Mattei B."/>
            <person name="McIntosh T.C."/>
            <person name="McLeod M.P."/>
            <person name="McPherson D."/>
            <person name="Merkulov G."/>
            <person name="Milshina N.V."/>
            <person name="Mobarry C."/>
            <person name="Morris J."/>
            <person name="Moshrefi A."/>
            <person name="Mount S.M."/>
            <person name="Moy M."/>
            <person name="Murphy B."/>
            <person name="Murphy L."/>
            <person name="Muzny D.M."/>
            <person name="Nelson D.L."/>
            <person name="Nelson D.R."/>
            <person name="Nelson K.A."/>
            <person name="Nixon K."/>
            <person name="Nusskern D.R."/>
            <person name="Pacleb J.M."/>
            <person name="Palazzolo M."/>
            <person name="Pittman G.S."/>
            <person name="Pan S."/>
            <person name="Pollard J."/>
            <person name="Puri V."/>
            <person name="Reese M.G."/>
            <person name="Reinert K."/>
            <person name="Remington K."/>
            <person name="Saunders R.D.C."/>
            <person name="Scheeler F."/>
            <person name="Shen H."/>
            <person name="Shue B.C."/>
            <person name="Siden-Kiamos I."/>
            <person name="Simpson M."/>
            <person name="Skupski M.P."/>
            <person name="Smith T.J."/>
            <person name="Spier E."/>
            <person name="Spradling A.C."/>
            <person name="Stapleton M."/>
            <person name="Strong R."/>
            <person name="Sun E."/>
            <person name="Svirskas R."/>
            <person name="Tector C."/>
            <person name="Turner R."/>
            <person name="Venter E."/>
            <person name="Wang A.H."/>
            <person name="Wang X."/>
            <person name="Wang Z.-Y."/>
            <person name="Wassarman D.A."/>
            <person name="Weinstock G.M."/>
            <person name="Weissenbach J."/>
            <person name="Williams S.M."/>
            <person name="Woodage T."/>
            <person name="Worley K.C."/>
            <person name="Wu D."/>
            <person name="Yang S."/>
            <person name="Yao Q.A."/>
            <person name="Ye J."/>
            <person name="Yeh R.-F."/>
            <person name="Zaveri J.S."/>
            <person name="Zhan M."/>
            <person name="Zhang G."/>
            <person name="Zhao Q."/>
            <person name="Zheng L."/>
            <person name="Zheng X.H."/>
            <person name="Zhong F.N."/>
            <person name="Zhong W."/>
            <person name="Zhou X."/>
            <person name="Zhu S.C."/>
            <person name="Zhu X."/>
            <person name="Smith H.O."/>
            <person name="Gibbs R.A."/>
            <person name="Myers E.W."/>
            <person name="Rubin G.M."/>
            <person name="Venter J.C."/>
        </authorList>
    </citation>
    <scope>NUCLEOTIDE SEQUENCE [LARGE SCALE GENOMIC DNA]</scope>
    <source>
        <strain evidence="9">Berkeley</strain>
    </source>
</reference>
<reference evidence="9" key="2">
    <citation type="journal article" date="2002" name="Genome Biol.">
        <title>Annotation of the Drosophila melanogaster euchromatic genome: a systematic review.</title>
        <authorList>
            <person name="Misra S."/>
            <person name="Crosby M.A."/>
            <person name="Mungall C.J."/>
            <person name="Matthews B.B."/>
            <person name="Campbell K.S."/>
            <person name="Hradecky P."/>
            <person name="Huang Y."/>
            <person name="Kaminker J.S."/>
            <person name="Millburn G.H."/>
            <person name="Prochnik S.E."/>
            <person name="Smith C.D."/>
            <person name="Tupy J.L."/>
            <person name="Whitfield E.J."/>
            <person name="Bayraktaroglu L."/>
            <person name="Berman B.P."/>
            <person name="Bettencourt B.R."/>
            <person name="Celniker S.E."/>
            <person name="de Grey A.D.N.J."/>
            <person name="Drysdale R.A."/>
            <person name="Harris N.L."/>
            <person name="Richter J."/>
            <person name="Russo S."/>
            <person name="Schroeder A.J."/>
            <person name="Shu S.Q."/>
            <person name="Stapleton M."/>
            <person name="Yamada C."/>
            <person name="Ashburner M."/>
            <person name="Gelbart W.M."/>
            <person name="Rubin G.M."/>
            <person name="Lewis S.E."/>
        </authorList>
    </citation>
    <scope>GENOME REANNOTATION</scope>
    <source>
        <strain evidence="9">Berkeley</strain>
    </source>
</reference>
<reference evidence="5" key="3">
    <citation type="journal article" date="2014" name="Curr. Biol.">
        <title>A migrating ciliary gate compartmentalizes the site of axoneme assembly in Drosophila spermatids.</title>
        <authorList>
            <person name="Basiri M.L."/>
            <person name="Ha A."/>
            <person name="Chadha A."/>
            <person name="Clark N.M."/>
            <person name="Polyanovsky A."/>
            <person name="Cook B."/>
            <person name="Avidor-Reiss T."/>
        </authorList>
    </citation>
    <scope>FUNCTION</scope>
    <scope>SUBCELLULAR LOCATION</scope>
    <scope>TISSUE SPECIFICITY</scope>
</reference>
<reference evidence="5" key="4">
    <citation type="journal article" date="2016" name="J. Cell Biol.">
        <title>Transition zone assembly and its contribution to axoneme formation in Drosophila male germ cells.</title>
        <authorList>
            <person name="Vieillard J."/>
            <person name="Paschaki M."/>
            <person name="Duteyrat J.L."/>
            <person name="Augiere C."/>
            <person name="Cortier E."/>
            <person name="Lapart J.A."/>
            <person name="Thomas J."/>
            <person name="Durand B."/>
        </authorList>
    </citation>
    <scope>FUNCTION</scope>
    <scope>IDENTIFICATION IN THE MKS COMPLEX</scope>
    <scope>SUBCELLULAR LOCATION</scope>
    <scope>TISSUE SPECIFICITY</scope>
    <scope>DISRUPTION PHENOTYPE</scope>
</reference>
<reference evidence="5" key="5">
    <citation type="journal article" date="2016" name="J. Cell Sci.">
        <title>Drosophila sensory cilia lacking MKS proteins exhibit striking defects in development but only subtle defects in adults.</title>
        <authorList>
            <person name="Pratt M.B."/>
            <person name="Titlow J.S."/>
            <person name="Davis I."/>
            <person name="Barker A.R."/>
            <person name="Dawe H.R."/>
            <person name="Raff J.W."/>
            <person name="Roque H."/>
        </authorList>
    </citation>
    <scope>FUNCTION</scope>
    <scope>IDENTIFICATION IN THE MKS COMPLEX</scope>
    <scope>SUBCELLULAR LOCATION</scope>
    <scope>TISSUE SPECIFICITY</scope>
</reference>
<proteinExistence type="evidence at protein level"/>
<evidence type="ECO:0000255" key="1">
    <source>
        <dbReference type="PROSITE-ProRule" id="PRU00713"/>
    </source>
</evidence>
<evidence type="ECO:0000269" key="2">
    <source>
    </source>
</evidence>
<evidence type="ECO:0000269" key="3">
    <source>
    </source>
</evidence>
<evidence type="ECO:0000269" key="4">
    <source>
    </source>
</evidence>
<evidence type="ECO:0000305" key="5"/>
<evidence type="ECO:0000305" key="6">
    <source>
    </source>
</evidence>
<evidence type="ECO:0000305" key="7">
    <source>
    </source>
</evidence>
<evidence type="ECO:0000312" key="8">
    <source>
        <dbReference type="FlyBase" id="FBgn0261683"/>
    </source>
</evidence>
<evidence type="ECO:0000312" key="9">
    <source>
        <dbReference type="Proteomes" id="UP000000803"/>
    </source>
</evidence>
<protein>
    <recommendedName>
        <fullName evidence="8">B9 domain-containing protein 2</fullName>
    </recommendedName>
    <alternativeName>
        <fullName evidence="5">MKS1-related protein 2</fullName>
    </alternativeName>
</protein>
<accession>M9MRD5</accession>
<gene>
    <name evidence="8" type="primary">B9d2</name>
    <name evidence="8" type="ORF">CG42730</name>
</gene>
<keyword id="KW-0966">Cell projection</keyword>
<keyword id="KW-0970">Cilium biogenesis/degradation</keyword>
<keyword id="KW-0963">Cytoplasm</keyword>
<keyword id="KW-0206">Cytoskeleton</keyword>
<keyword id="KW-1185">Reference proteome</keyword>
<organism evidence="9">
    <name type="scientific">Drosophila melanogaster</name>
    <name type="common">Fruit fly</name>
    <dbReference type="NCBI Taxonomy" id="7227"/>
    <lineage>
        <taxon>Eukaryota</taxon>
        <taxon>Metazoa</taxon>
        <taxon>Ecdysozoa</taxon>
        <taxon>Arthropoda</taxon>
        <taxon>Hexapoda</taxon>
        <taxon>Insecta</taxon>
        <taxon>Pterygota</taxon>
        <taxon>Neoptera</taxon>
        <taxon>Endopterygota</taxon>
        <taxon>Diptera</taxon>
        <taxon>Brachycera</taxon>
        <taxon>Muscomorpha</taxon>
        <taxon>Ephydroidea</taxon>
        <taxon>Drosophilidae</taxon>
        <taxon>Drosophila</taxon>
        <taxon>Sophophora</taxon>
    </lineage>
</organism>
<feature type="chain" id="PRO_0000445801" description="B9 domain-containing protein 2" evidence="5">
    <location>
        <begin position="1"/>
        <end position="177"/>
    </location>
</feature>
<feature type="domain" description="C2 B9-type" evidence="1">
    <location>
        <begin position="2"/>
        <end position="118"/>
    </location>
</feature>
<sequence>MAEVHIIGQILKAVDFAEPHLYCKWSLQSGNAWRLVQGEVQGQSHVASHRLQSSSDFAQPLDIHLSTASVQGWPRLLVEVYAVNVLQQSWPVGYGFVHVPSTPGTHRLEIGTWKVAPNGLWQSLRERFGGGGAALSKTDLLYSGVERYKLQTLSSGKVIVELNLIFRKFDEYGVEFK</sequence>
<comment type="function">
    <text evidence="2 3 4">Probable component of the tectonic-like complex (also named MKS complex), a complex localized at the transition zone of primary cilia (PubMed:25447994, PubMed:27577095, PubMed:27646273). Has a role in ciliary structure and function (PubMed:27646273).</text>
</comment>
<comment type="subunit">
    <text evidence="6 7">Probable component of the tectonic-like complex (also named MKS complex), composed of B9d1, B9d2, Cc2d2a, Mks1 and tctn.</text>
</comment>
<comment type="subcellular location">
    <subcellularLocation>
        <location evidence="2 3 4">Cytoplasm</location>
        <location evidence="2 3 4">Cytoskeleton</location>
        <location evidence="2 3 4">Cilium basal body</location>
    </subcellularLocation>
    <text evidence="2 3 4">Localizes at the transition zone (TZ), a region between the basal body and the ciliary axoneme (PubMed:27646273). In spermatocytes, localizes in the transition zone and the migrating base of the spermatid ciliary cap (PubMed:25447994, PubMed:27577095). Co-localizes with the tectonic-like complex (PubMed:27646273).</text>
</comment>
<comment type="tissue specificity">
    <text evidence="2 3 4">Expressed in chordotonal neurons in the antennae (at protein level) (PubMed:27646273). Expressed in spermatids (at protein level) (PubMed:25447994, PubMed:27577095).</text>
</comment>
<comment type="disruption phenotype">
    <text evidence="4">Simultaneous knockout of B9d2 and tctn is viable and does not show sensory behavioral defects (PubMed:27646273). Males produce motile sperm and show only slightly reduced fertility (PubMed:27646273). Sperm flagella show weakly ultrastructural defects including broken and disorganised structure (PubMed:27646273). Length of the transition zone is decreased and recruitment of the tectonic-like complex compromised (PubMed:27646273).</text>
</comment>
<comment type="similarity">
    <text evidence="5">Belongs to the B9D family.</text>
</comment>
<name>B9D2_DROME</name>